<accession>D4AWL0</accession>
<gene>
    <name type="ORF">ARB_00576</name>
</gene>
<comment type="function">
    <text evidence="1">Probable extracellular aminopeptidase which contributes to pathogenicity.</text>
</comment>
<comment type="cofactor">
    <cofactor evidence="1">
        <name>Zn(2+)</name>
        <dbReference type="ChEBI" id="CHEBI:29105"/>
    </cofactor>
    <text evidence="1">Binds 2 Zn(2+) ions per subunit.</text>
</comment>
<comment type="subunit">
    <text evidence="1">Monomer.</text>
</comment>
<comment type="subcellular location">
    <subcellularLocation>
        <location evidence="1">Secreted</location>
    </subcellularLocation>
</comment>
<comment type="similarity">
    <text evidence="4">Belongs to the peptidase M28 family. M28E subfamily.</text>
</comment>
<dbReference type="EC" id="3.4.11.-"/>
<dbReference type="EMBL" id="ABSU01000015">
    <property type="protein sequence ID" value="EFE32391.1"/>
    <property type="molecule type" value="Genomic_DNA"/>
</dbReference>
<dbReference type="RefSeq" id="XP_003013031.1">
    <property type="nucleotide sequence ID" value="XM_003012985.1"/>
</dbReference>
<dbReference type="SMR" id="D4AWL0"/>
<dbReference type="GeneID" id="9523111"/>
<dbReference type="KEGG" id="abe:ARB_00576"/>
<dbReference type="eggNOG" id="KOG2195">
    <property type="taxonomic scope" value="Eukaryota"/>
</dbReference>
<dbReference type="HOGENOM" id="CLU_025866_0_0_1"/>
<dbReference type="OMA" id="VESAQWV"/>
<dbReference type="OrthoDB" id="2214at2759"/>
<dbReference type="Proteomes" id="UP000008866">
    <property type="component" value="Unassembled WGS sequence"/>
</dbReference>
<dbReference type="GO" id="GO:0005576">
    <property type="term" value="C:extracellular region"/>
    <property type="evidence" value="ECO:0007669"/>
    <property type="project" value="UniProtKB-SubCell"/>
</dbReference>
<dbReference type="GO" id="GO:0004177">
    <property type="term" value="F:aminopeptidase activity"/>
    <property type="evidence" value="ECO:0007669"/>
    <property type="project" value="UniProtKB-KW"/>
</dbReference>
<dbReference type="GO" id="GO:0046872">
    <property type="term" value="F:metal ion binding"/>
    <property type="evidence" value="ECO:0007669"/>
    <property type="project" value="UniProtKB-KW"/>
</dbReference>
<dbReference type="GO" id="GO:0008235">
    <property type="term" value="F:metalloexopeptidase activity"/>
    <property type="evidence" value="ECO:0007669"/>
    <property type="project" value="InterPro"/>
</dbReference>
<dbReference type="GO" id="GO:0006508">
    <property type="term" value="P:proteolysis"/>
    <property type="evidence" value="ECO:0007669"/>
    <property type="project" value="UniProtKB-KW"/>
</dbReference>
<dbReference type="CDD" id="cd03879">
    <property type="entry name" value="M28_AAP"/>
    <property type="match status" value="1"/>
</dbReference>
<dbReference type="FunFam" id="3.40.630.10:FF:000042">
    <property type="entry name" value="Peptide hydrolase"/>
    <property type="match status" value="1"/>
</dbReference>
<dbReference type="Gene3D" id="3.40.630.10">
    <property type="entry name" value="Zn peptidases"/>
    <property type="match status" value="1"/>
</dbReference>
<dbReference type="InterPro" id="IPR045175">
    <property type="entry name" value="M28_fam"/>
</dbReference>
<dbReference type="InterPro" id="IPR007484">
    <property type="entry name" value="Peptidase_M28"/>
</dbReference>
<dbReference type="PANTHER" id="PTHR12147:SF56">
    <property type="entry name" value="AMINOPEPTIDASE YDR415C-RELATED"/>
    <property type="match status" value="1"/>
</dbReference>
<dbReference type="PANTHER" id="PTHR12147">
    <property type="entry name" value="METALLOPEPTIDASE M28 FAMILY MEMBER"/>
    <property type="match status" value="1"/>
</dbReference>
<dbReference type="Pfam" id="PF04389">
    <property type="entry name" value="Peptidase_M28"/>
    <property type="match status" value="1"/>
</dbReference>
<dbReference type="SUPFAM" id="SSF53187">
    <property type="entry name" value="Zn-dependent exopeptidases"/>
    <property type="match status" value="1"/>
</dbReference>
<reference key="1">
    <citation type="journal article" date="2011" name="Genome Biol.">
        <title>Comparative and functional genomics provide insights into the pathogenicity of dermatophytic fungi.</title>
        <authorList>
            <person name="Burmester A."/>
            <person name="Shelest E."/>
            <person name="Gloeckner G."/>
            <person name="Heddergott C."/>
            <person name="Schindler S."/>
            <person name="Staib P."/>
            <person name="Heidel A."/>
            <person name="Felder M."/>
            <person name="Petzold A."/>
            <person name="Szafranski K."/>
            <person name="Feuermann M."/>
            <person name="Pedruzzi I."/>
            <person name="Priebe S."/>
            <person name="Groth M."/>
            <person name="Winkler R."/>
            <person name="Li W."/>
            <person name="Kniemeyer O."/>
            <person name="Schroeckh V."/>
            <person name="Hertweck C."/>
            <person name="Hube B."/>
            <person name="White T.C."/>
            <person name="Platzer M."/>
            <person name="Guthke R."/>
            <person name="Heitman J."/>
            <person name="Woestemeyer J."/>
            <person name="Zipfel P.F."/>
            <person name="Monod M."/>
            <person name="Brakhage A.A."/>
        </authorList>
    </citation>
    <scope>NUCLEOTIDE SEQUENCE [LARGE SCALE GENOMIC DNA]</scope>
    <source>
        <strain>ATCC MYA-4681 / CBS 112371</strain>
    </source>
</reference>
<organism>
    <name type="scientific">Arthroderma benhamiae (strain ATCC MYA-4681 / CBS 112371)</name>
    <name type="common">Trichophyton mentagrophytes</name>
    <dbReference type="NCBI Taxonomy" id="663331"/>
    <lineage>
        <taxon>Eukaryota</taxon>
        <taxon>Fungi</taxon>
        <taxon>Dikarya</taxon>
        <taxon>Ascomycota</taxon>
        <taxon>Pezizomycotina</taxon>
        <taxon>Eurotiomycetes</taxon>
        <taxon>Eurotiomycetidae</taxon>
        <taxon>Onygenales</taxon>
        <taxon>Arthrodermataceae</taxon>
        <taxon>Trichophyton</taxon>
    </lineage>
</organism>
<evidence type="ECO:0000250" key="1"/>
<evidence type="ECO:0000255" key="2"/>
<evidence type="ECO:0000256" key="3">
    <source>
        <dbReference type="SAM" id="MobiDB-lite"/>
    </source>
</evidence>
<evidence type="ECO:0000305" key="4"/>
<keyword id="KW-0031">Aminopeptidase</keyword>
<keyword id="KW-1015">Disulfide bond</keyword>
<keyword id="KW-0325">Glycoprotein</keyword>
<keyword id="KW-0378">Hydrolase</keyword>
<keyword id="KW-0479">Metal-binding</keyword>
<keyword id="KW-0645">Protease</keyword>
<keyword id="KW-1185">Reference proteome</keyword>
<keyword id="KW-0964">Secreted</keyword>
<keyword id="KW-0732">Signal</keyword>
<keyword id="KW-0843">Virulence</keyword>
<keyword id="KW-0862">Zinc</keyword>
<protein>
    <recommendedName>
        <fullName>Probable leucine aminopeptidase ARB_00576</fullName>
        <ecNumber>3.4.11.-</ecNumber>
    </recommendedName>
    <alternativeName>
        <fullName>Leucyl aminopeptidase ARB_00576</fullName>
    </alternativeName>
</protein>
<name>LAP5_ARTBC</name>
<proteinExistence type="inferred from homology"/>
<feature type="signal peptide" evidence="2">
    <location>
        <begin position="1"/>
        <end position="15"/>
    </location>
</feature>
<feature type="chain" id="PRO_0000397775" description="Probable leucine aminopeptidase ARB_00576">
    <location>
        <begin position="16"/>
        <end position="357"/>
    </location>
</feature>
<feature type="region of interest" description="Disordered" evidence="3">
    <location>
        <begin position="169"/>
        <end position="188"/>
    </location>
</feature>
<feature type="binding site" evidence="1">
    <location>
        <position position="167"/>
    </location>
    <ligand>
        <name>Zn(2+)</name>
        <dbReference type="ChEBI" id="CHEBI:29105"/>
        <label>1</label>
    </ligand>
</feature>
<feature type="binding site" evidence="1">
    <location>
        <position position="185"/>
    </location>
    <ligand>
        <name>Zn(2+)</name>
        <dbReference type="ChEBI" id="CHEBI:29105"/>
        <label>1</label>
    </ligand>
</feature>
<feature type="binding site" evidence="1">
    <location>
        <position position="185"/>
    </location>
    <ligand>
        <name>Zn(2+)</name>
        <dbReference type="ChEBI" id="CHEBI:29105"/>
        <label>2</label>
        <note>catalytic</note>
    </ligand>
</feature>
<feature type="binding site" evidence="1">
    <location>
        <position position="224"/>
    </location>
    <ligand>
        <name>Zn(2+)</name>
        <dbReference type="ChEBI" id="CHEBI:29105"/>
        <label>2</label>
        <note>catalytic</note>
    </ligand>
</feature>
<feature type="binding site" evidence="1">
    <location>
        <position position="251"/>
    </location>
    <ligand>
        <name>Zn(2+)</name>
        <dbReference type="ChEBI" id="CHEBI:29105"/>
        <label>1</label>
    </ligand>
</feature>
<feature type="binding site" evidence="1">
    <location>
        <position position="324"/>
    </location>
    <ligand>
        <name>Zn(2+)</name>
        <dbReference type="ChEBI" id="CHEBI:29105"/>
        <label>2</label>
        <note>catalytic</note>
    </ligand>
</feature>
<feature type="glycosylation site" description="N-linked (GlcNAc...) asparagine" evidence="2">
    <location>
        <position position="76"/>
    </location>
</feature>
<feature type="glycosylation site" description="N-linked (GlcNAc...) asparagine" evidence="2">
    <location>
        <position position="186"/>
    </location>
</feature>
<feature type="glycosylation site" description="N-linked (GlcNAc...) asparagine" evidence="2">
    <location>
        <position position="269"/>
    </location>
</feature>
<feature type="disulfide bond" evidence="1">
    <location>
        <begin position="291"/>
        <end position="295"/>
    </location>
</feature>
<sequence length="357" mass="38497">MKVLAALALSALAMAKPTPPMPGMSLVQTGPQETRWVTAKEKHDMVMNHIGFFDITNRPETASIASKPKSYAFPGNVSHQAEVKPLLEKISADHIKANLEKFSSYPNRYYDAQSGVESAQWVMEQAQAVVGNIQGAKVEMVKHDWMQPSIRAIIPGKSEKIVAVGAHQDSINGNNPQGEAPGADDNGSGSMTILEALTALVSDQKIAGGEAANTLEFHWYAGEEEGLLGSQDIFQQYSQEGKEVVAMLNQDMTGYGETMGVITDNSDPNLTKFTKMILDTYTSAKYSDSECGYACSDHASANKAGFPSAFVYEAVVGQDNPAIHSPDDTIEKLDPAKMAEHAKLVVGFAYELAFATL</sequence>